<evidence type="ECO:0000255" key="1">
    <source>
        <dbReference type="HAMAP-Rule" id="MF_00090"/>
    </source>
</evidence>
<organism>
    <name type="scientific">Xanthomonas campestris pv. campestris (strain 8004)</name>
    <dbReference type="NCBI Taxonomy" id="314565"/>
    <lineage>
        <taxon>Bacteria</taxon>
        <taxon>Pseudomonadati</taxon>
        <taxon>Pseudomonadota</taxon>
        <taxon>Gammaproteobacteria</taxon>
        <taxon>Lysobacterales</taxon>
        <taxon>Lysobacteraceae</taxon>
        <taxon>Xanthomonas</taxon>
    </lineage>
</organism>
<name>PIMT_XANC8</name>
<dbReference type="EC" id="2.1.1.77" evidence="1"/>
<dbReference type="EMBL" id="CP000050">
    <property type="protein sequence ID" value="AAY49574.1"/>
    <property type="molecule type" value="Genomic_DNA"/>
</dbReference>
<dbReference type="RefSeq" id="WP_011036884.1">
    <property type="nucleotide sequence ID" value="NZ_CP155948.1"/>
</dbReference>
<dbReference type="SMR" id="Q4UTP9"/>
<dbReference type="KEGG" id="xcb:XC_2524"/>
<dbReference type="HOGENOM" id="CLU_055432_2_0_6"/>
<dbReference type="Proteomes" id="UP000000420">
    <property type="component" value="Chromosome"/>
</dbReference>
<dbReference type="GO" id="GO:0005737">
    <property type="term" value="C:cytoplasm"/>
    <property type="evidence" value="ECO:0007669"/>
    <property type="project" value="UniProtKB-SubCell"/>
</dbReference>
<dbReference type="GO" id="GO:0004719">
    <property type="term" value="F:protein-L-isoaspartate (D-aspartate) O-methyltransferase activity"/>
    <property type="evidence" value="ECO:0007669"/>
    <property type="project" value="UniProtKB-UniRule"/>
</dbReference>
<dbReference type="GO" id="GO:0032259">
    <property type="term" value="P:methylation"/>
    <property type="evidence" value="ECO:0007669"/>
    <property type="project" value="UniProtKB-KW"/>
</dbReference>
<dbReference type="GO" id="GO:0036211">
    <property type="term" value="P:protein modification process"/>
    <property type="evidence" value="ECO:0007669"/>
    <property type="project" value="UniProtKB-UniRule"/>
</dbReference>
<dbReference type="GO" id="GO:0030091">
    <property type="term" value="P:protein repair"/>
    <property type="evidence" value="ECO:0007669"/>
    <property type="project" value="UniProtKB-UniRule"/>
</dbReference>
<dbReference type="CDD" id="cd02440">
    <property type="entry name" value="AdoMet_MTases"/>
    <property type="match status" value="1"/>
</dbReference>
<dbReference type="FunFam" id="3.40.50.150:FF:000010">
    <property type="entry name" value="Protein-L-isoaspartate O-methyltransferase"/>
    <property type="match status" value="1"/>
</dbReference>
<dbReference type="Gene3D" id="3.40.50.150">
    <property type="entry name" value="Vaccinia Virus protein VP39"/>
    <property type="match status" value="1"/>
</dbReference>
<dbReference type="HAMAP" id="MF_00090">
    <property type="entry name" value="PIMT"/>
    <property type="match status" value="1"/>
</dbReference>
<dbReference type="InterPro" id="IPR000682">
    <property type="entry name" value="PCMT"/>
</dbReference>
<dbReference type="InterPro" id="IPR029063">
    <property type="entry name" value="SAM-dependent_MTases_sf"/>
</dbReference>
<dbReference type="NCBIfam" id="TIGR00080">
    <property type="entry name" value="pimt"/>
    <property type="match status" value="1"/>
</dbReference>
<dbReference type="NCBIfam" id="NF001453">
    <property type="entry name" value="PRK00312.1"/>
    <property type="match status" value="1"/>
</dbReference>
<dbReference type="PANTHER" id="PTHR11579">
    <property type="entry name" value="PROTEIN-L-ISOASPARTATE O-METHYLTRANSFERASE"/>
    <property type="match status" value="1"/>
</dbReference>
<dbReference type="PANTHER" id="PTHR11579:SF0">
    <property type="entry name" value="PROTEIN-L-ISOASPARTATE(D-ASPARTATE) O-METHYLTRANSFERASE"/>
    <property type="match status" value="1"/>
</dbReference>
<dbReference type="Pfam" id="PF01135">
    <property type="entry name" value="PCMT"/>
    <property type="match status" value="1"/>
</dbReference>
<dbReference type="SUPFAM" id="SSF53335">
    <property type="entry name" value="S-adenosyl-L-methionine-dependent methyltransferases"/>
    <property type="match status" value="1"/>
</dbReference>
<dbReference type="PROSITE" id="PS01279">
    <property type="entry name" value="PCMT"/>
    <property type="match status" value="1"/>
</dbReference>
<reference key="1">
    <citation type="journal article" date="2005" name="Genome Res.">
        <title>Comparative and functional genomic analyses of the pathogenicity of phytopathogen Xanthomonas campestris pv. campestris.</title>
        <authorList>
            <person name="Qian W."/>
            <person name="Jia Y."/>
            <person name="Ren S.-X."/>
            <person name="He Y.-Q."/>
            <person name="Feng J.-X."/>
            <person name="Lu L.-F."/>
            <person name="Sun Q."/>
            <person name="Ying G."/>
            <person name="Tang D.-J."/>
            <person name="Tang H."/>
            <person name="Wu W."/>
            <person name="Hao P."/>
            <person name="Wang L."/>
            <person name="Jiang B.-L."/>
            <person name="Zeng S."/>
            <person name="Gu W.-Y."/>
            <person name="Lu G."/>
            <person name="Rong L."/>
            <person name="Tian Y."/>
            <person name="Yao Z."/>
            <person name="Fu G."/>
            <person name="Chen B."/>
            <person name="Fang R."/>
            <person name="Qiang B."/>
            <person name="Chen Z."/>
            <person name="Zhao G.-P."/>
            <person name="Tang J.-L."/>
            <person name="He C."/>
        </authorList>
    </citation>
    <scope>NUCLEOTIDE SEQUENCE [LARGE SCALE GENOMIC DNA]</scope>
    <source>
        <strain>8004</strain>
    </source>
</reference>
<feature type="chain" id="PRO_0000351953" description="Protein-L-isoaspartate O-methyltransferase">
    <location>
        <begin position="1"/>
        <end position="225"/>
    </location>
</feature>
<feature type="active site" evidence="1">
    <location>
        <position position="75"/>
    </location>
</feature>
<comment type="function">
    <text evidence="1">Catalyzes the methyl esterification of L-isoaspartyl residues in peptides and proteins that result from spontaneous decomposition of normal L-aspartyl and L-asparaginyl residues. It plays a role in the repair and/or degradation of damaged proteins.</text>
</comment>
<comment type="catalytic activity">
    <reaction evidence="1">
        <text>[protein]-L-isoaspartate + S-adenosyl-L-methionine = [protein]-L-isoaspartate alpha-methyl ester + S-adenosyl-L-homocysteine</text>
        <dbReference type="Rhea" id="RHEA:12705"/>
        <dbReference type="Rhea" id="RHEA-COMP:12143"/>
        <dbReference type="Rhea" id="RHEA-COMP:12144"/>
        <dbReference type="ChEBI" id="CHEBI:57856"/>
        <dbReference type="ChEBI" id="CHEBI:59789"/>
        <dbReference type="ChEBI" id="CHEBI:90596"/>
        <dbReference type="ChEBI" id="CHEBI:90598"/>
        <dbReference type="EC" id="2.1.1.77"/>
    </reaction>
</comment>
<comment type="subcellular location">
    <subcellularLocation>
        <location evidence="1">Cytoplasm</location>
    </subcellularLocation>
</comment>
<comment type="similarity">
    <text evidence="1">Belongs to the methyltransferase superfamily. L-isoaspartyl/D-aspartyl protein methyltransferase family.</text>
</comment>
<accession>Q4UTP9</accession>
<gene>
    <name evidence="1" type="primary">pcm</name>
    <name type="ordered locus">XC_2524</name>
</gene>
<proteinExistence type="inferred from homology"/>
<sequence length="225" mass="24209">MTPRLRLQPESVGIGMTSQRVRDRLVERLRESGIQDEATLNAVRTVPRHLFIDEALASRAYEDTALPIGHGQTISQPWVVARMTEAVLQVAPKKVLEVGTGSGYQGAILAALGLEVYTVERIGDLLRQARKRFRHLGMNVRSKHDDGRIGWPEHGPYDAIVVTAAAPALVDALVDQLAVGGRLVAPVGGASSQSLVQLTRGADGEIAQEVLAPVTFVPLLSGMLD</sequence>
<keyword id="KW-0963">Cytoplasm</keyword>
<keyword id="KW-0489">Methyltransferase</keyword>
<keyword id="KW-0949">S-adenosyl-L-methionine</keyword>
<keyword id="KW-0808">Transferase</keyword>
<protein>
    <recommendedName>
        <fullName evidence="1">Protein-L-isoaspartate O-methyltransferase</fullName>
        <ecNumber evidence="1">2.1.1.77</ecNumber>
    </recommendedName>
    <alternativeName>
        <fullName evidence="1">L-isoaspartyl protein carboxyl methyltransferase</fullName>
    </alternativeName>
    <alternativeName>
        <fullName evidence="1">Protein L-isoaspartyl methyltransferase</fullName>
    </alternativeName>
    <alternativeName>
        <fullName evidence="1">Protein-beta-aspartate methyltransferase</fullName>
        <shortName evidence="1">PIMT</shortName>
    </alternativeName>
</protein>